<proteinExistence type="inferred from homology"/>
<reference key="1">
    <citation type="journal article" date="2007" name="PLoS Genet.">
        <title>Patterns and implications of gene gain and loss in the evolution of Prochlorococcus.</title>
        <authorList>
            <person name="Kettler G.C."/>
            <person name="Martiny A.C."/>
            <person name="Huang K."/>
            <person name="Zucker J."/>
            <person name="Coleman M.L."/>
            <person name="Rodrigue S."/>
            <person name="Chen F."/>
            <person name="Lapidus A."/>
            <person name="Ferriera S."/>
            <person name="Johnson J."/>
            <person name="Steglich C."/>
            <person name="Church G.M."/>
            <person name="Richardson P."/>
            <person name="Chisholm S.W."/>
        </authorList>
    </citation>
    <scope>NUCLEOTIDE SEQUENCE [LARGE SCALE GENOMIC DNA]</scope>
    <source>
        <strain>NATL2A</strain>
    </source>
</reference>
<keyword id="KW-0413">Isomerase</keyword>
<keyword id="KW-1185">Reference proteome</keyword>
<keyword id="KW-0819">tRNA processing</keyword>
<feature type="chain" id="PRO_0000229369" description="tRNA pseudouridine synthase B">
    <location>
        <begin position="1"/>
        <end position="314"/>
    </location>
</feature>
<feature type="active site" description="Nucleophile" evidence="1">
    <location>
        <position position="41"/>
    </location>
</feature>
<sequence length="314" mass="35324">MEKPFGFVVIDKPSGLTSHDCVNRLRKVFGIKKIGHSGTLDPAVTGVLPIAIGDATRLISYLQGSKAYRGIIQLGATTNTDDMQGEIIESKAWPLITQNYINYLLENFRGEILQKPPIFSSVHIKGERAYKKARKGEKFDLIPKKVTINKLNLISWSQDKGELLVDVDCSTGTYIRSLARDIGDKIGCGGYLKSLRRTKAYNFIENHSVKLPEKSDFYPEGDKPKVLNPNIFFKHLSSFELISEEEIISWRSGRKISFQNNVKRLKVTKNNEVEDSFIHNNHILVLNKENKILGIACLDDSFAIKPKVVFNAIG</sequence>
<accession>Q46JB9</accession>
<evidence type="ECO:0000255" key="1">
    <source>
        <dbReference type="HAMAP-Rule" id="MF_01080"/>
    </source>
</evidence>
<comment type="function">
    <text evidence="1">Responsible for synthesis of pseudouridine from uracil-55 in the psi GC loop of transfer RNAs.</text>
</comment>
<comment type="catalytic activity">
    <reaction evidence="1">
        <text>uridine(55) in tRNA = pseudouridine(55) in tRNA</text>
        <dbReference type="Rhea" id="RHEA:42532"/>
        <dbReference type="Rhea" id="RHEA-COMP:10101"/>
        <dbReference type="Rhea" id="RHEA-COMP:10102"/>
        <dbReference type="ChEBI" id="CHEBI:65314"/>
        <dbReference type="ChEBI" id="CHEBI:65315"/>
        <dbReference type="EC" id="5.4.99.25"/>
    </reaction>
</comment>
<comment type="similarity">
    <text evidence="1">Belongs to the pseudouridine synthase TruB family. Type 1 subfamily.</text>
</comment>
<dbReference type="EC" id="5.4.99.25" evidence="1"/>
<dbReference type="EMBL" id="CP000095">
    <property type="protein sequence ID" value="AAZ58409.1"/>
    <property type="molecule type" value="Genomic_DNA"/>
</dbReference>
<dbReference type="RefSeq" id="WP_011295266.1">
    <property type="nucleotide sequence ID" value="NC_007335.2"/>
</dbReference>
<dbReference type="SMR" id="Q46JB9"/>
<dbReference type="STRING" id="59920.PMN2A_0918"/>
<dbReference type="KEGG" id="pmn:PMN2A_0918"/>
<dbReference type="HOGENOM" id="CLU_032087_0_0_3"/>
<dbReference type="OrthoDB" id="9802309at2"/>
<dbReference type="PhylomeDB" id="Q46JB9"/>
<dbReference type="Proteomes" id="UP000002535">
    <property type="component" value="Chromosome"/>
</dbReference>
<dbReference type="GO" id="GO:0003723">
    <property type="term" value="F:RNA binding"/>
    <property type="evidence" value="ECO:0007669"/>
    <property type="project" value="InterPro"/>
</dbReference>
<dbReference type="GO" id="GO:0160148">
    <property type="term" value="F:tRNA pseudouridine(55) synthase activity"/>
    <property type="evidence" value="ECO:0007669"/>
    <property type="project" value="UniProtKB-EC"/>
</dbReference>
<dbReference type="GO" id="GO:1990481">
    <property type="term" value="P:mRNA pseudouridine synthesis"/>
    <property type="evidence" value="ECO:0007669"/>
    <property type="project" value="TreeGrafter"/>
</dbReference>
<dbReference type="GO" id="GO:0031119">
    <property type="term" value="P:tRNA pseudouridine synthesis"/>
    <property type="evidence" value="ECO:0007669"/>
    <property type="project" value="UniProtKB-UniRule"/>
</dbReference>
<dbReference type="CDD" id="cd02573">
    <property type="entry name" value="PseudoU_synth_EcTruB"/>
    <property type="match status" value="1"/>
</dbReference>
<dbReference type="Gene3D" id="3.30.2350.10">
    <property type="entry name" value="Pseudouridine synthase"/>
    <property type="match status" value="1"/>
</dbReference>
<dbReference type="HAMAP" id="MF_01080">
    <property type="entry name" value="TruB_bact"/>
    <property type="match status" value="1"/>
</dbReference>
<dbReference type="InterPro" id="IPR020103">
    <property type="entry name" value="PsdUridine_synth_cat_dom_sf"/>
</dbReference>
<dbReference type="InterPro" id="IPR002501">
    <property type="entry name" value="PsdUridine_synth_N"/>
</dbReference>
<dbReference type="InterPro" id="IPR014780">
    <property type="entry name" value="tRNA_psdUridine_synth_TruB"/>
</dbReference>
<dbReference type="InterPro" id="IPR032819">
    <property type="entry name" value="TruB_C"/>
</dbReference>
<dbReference type="NCBIfam" id="TIGR00431">
    <property type="entry name" value="TruB"/>
    <property type="match status" value="1"/>
</dbReference>
<dbReference type="PANTHER" id="PTHR13767:SF2">
    <property type="entry name" value="PSEUDOURIDYLATE SYNTHASE TRUB1"/>
    <property type="match status" value="1"/>
</dbReference>
<dbReference type="PANTHER" id="PTHR13767">
    <property type="entry name" value="TRNA-PSEUDOURIDINE SYNTHASE"/>
    <property type="match status" value="1"/>
</dbReference>
<dbReference type="Pfam" id="PF16198">
    <property type="entry name" value="TruB_C_2"/>
    <property type="match status" value="1"/>
</dbReference>
<dbReference type="Pfam" id="PF01509">
    <property type="entry name" value="TruB_N"/>
    <property type="match status" value="1"/>
</dbReference>
<dbReference type="SUPFAM" id="SSF55120">
    <property type="entry name" value="Pseudouridine synthase"/>
    <property type="match status" value="1"/>
</dbReference>
<organism>
    <name type="scientific">Prochlorococcus marinus (strain NATL2A)</name>
    <dbReference type="NCBI Taxonomy" id="59920"/>
    <lineage>
        <taxon>Bacteria</taxon>
        <taxon>Bacillati</taxon>
        <taxon>Cyanobacteriota</taxon>
        <taxon>Cyanophyceae</taxon>
        <taxon>Synechococcales</taxon>
        <taxon>Prochlorococcaceae</taxon>
        <taxon>Prochlorococcus</taxon>
    </lineage>
</organism>
<gene>
    <name evidence="1" type="primary">truB</name>
    <name type="ordered locus">PMN2A_0918</name>
</gene>
<protein>
    <recommendedName>
        <fullName evidence="1">tRNA pseudouridine synthase B</fullName>
        <ecNumber evidence="1">5.4.99.25</ecNumber>
    </recommendedName>
    <alternativeName>
        <fullName evidence="1">tRNA pseudouridine(55) synthase</fullName>
        <shortName evidence="1">Psi55 synthase</shortName>
    </alternativeName>
    <alternativeName>
        <fullName evidence="1">tRNA pseudouridylate synthase</fullName>
    </alternativeName>
    <alternativeName>
        <fullName evidence="1">tRNA-uridine isomerase</fullName>
    </alternativeName>
</protein>
<name>TRUB_PROMT</name>